<sequence>RTCYKTPSVKPETCPHGENICYTETWCDAWCSQRGKREELGCAATCPKVKAGVGIKCCSTDNCDPFPVKNPR</sequence>
<dbReference type="PIR" id="A01665">
    <property type="entry name" value="N2EP1V"/>
</dbReference>
<dbReference type="SMR" id="P01394"/>
<dbReference type="GO" id="GO:0005576">
    <property type="term" value="C:extracellular region"/>
    <property type="evidence" value="ECO:0007669"/>
    <property type="project" value="UniProtKB-SubCell"/>
</dbReference>
<dbReference type="GO" id="GO:0030550">
    <property type="term" value="F:acetylcholine receptor inhibitor activity"/>
    <property type="evidence" value="ECO:0007669"/>
    <property type="project" value="UniProtKB-KW"/>
</dbReference>
<dbReference type="GO" id="GO:0099106">
    <property type="term" value="F:ion channel regulator activity"/>
    <property type="evidence" value="ECO:0007669"/>
    <property type="project" value="UniProtKB-KW"/>
</dbReference>
<dbReference type="GO" id="GO:0090729">
    <property type="term" value="F:toxin activity"/>
    <property type="evidence" value="ECO:0007669"/>
    <property type="project" value="UniProtKB-KW"/>
</dbReference>
<dbReference type="CDD" id="cd00206">
    <property type="entry name" value="TFP_snake_toxin"/>
    <property type="match status" value="1"/>
</dbReference>
<dbReference type="Gene3D" id="2.10.60.10">
    <property type="entry name" value="CD59"/>
    <property type="match status" value="1"/>
</dbReference>
<dbReference type="InterPro" id="IPR003571">
    <property type="entry name" value="Snake_3FTx"/>
</dbReference>
<dbReference type="InterPro" id="IPR045860">
    <property type="entry name" value="Snake_toxin-like_sf"/>
</dbReference>
<dbReference type="InterPro" id="IPR018354">
    <property type="entry name" value="Snake_toxin_con_site"/>
</dbReference>
<dbReference type="InterPro" id="IPR054131">
    <property type="entry name" value="Toxin_cobra-type"/>
</dbReference>
<dbReference type="Pfam" id="PF21947">
    <property type="entry name" value="Toxin_cobra-type"/>
    <property type="match status" value="1"/>
</dbReference>
<dbReference type="SUPFAM" id="SSF57302">
    <property type="entry name" value="Snake toxin-like"/>
    <property type="match status" value="1"/>
</dbReference>
<dbReference type="PROSITE" id="PS00272">
    <property type="entry name" value="SNAKE_TOXIN"/>
    <property type="match status" value="1"/>
</dbReference>
<reference key="1">
    <citation type="journal article" date="1974" name="Eur. J. Biochem.">
        <title>The primary sequences and neuromuscular effects of three neurotoxic polypeptides from the venom of Dendroaspis viridis.</title>
        <authorList>
            <person name="Banks B.E.C."/>
            <person name="Miledi R."/>
            <person name="Shipolini R.A."/>
        </authorList>
    </citation>
    <scope>PROTEIN SEQUENCE</scope>
    <scope>TOXIC DOSE</scope>
    <scope>SUBCELLULAR LOCATION</scope>
    <source>
        <tissue>Venom</tissue>
    </source>
</reference>
<organism>
    <name type="scientific">Dendroaspis viridis</name>
    <name type="common">Western green mamba</name>
    <dbReference type="NCBI Taxonomy" id="8621"/>
    <lineage>
        <taxon>Eukaryota</taxon>
        <taxon>Metazoa</taxon>
        <taxon>Chordata</taxon>
        <taxon>Craniata</taxon>
        <taxon>Vertebrata</taxon>
        <taxon>Euteleostomi</taxon>
        <taxon>Lepidosauria</taxon>
        <taxon>Squamata</taxon>
        <taxon>Bifurcata</taxon>
        <taxon>Unidentata</taxon>
        <taxon>Episquamata</taxon>
        <taxon>Toxicofera</taxon>
        <taxon>Serpentes</taxon>
        <taxon>Colubroidea</taxon>
        <taxon>Elapidae</taxon>
        <taxon>Elapinae</taxon>
        <taxon>Dendroaspis</taxon>
    </lineage>
</organism>
<name>3L21_DENVI</name>
<accession>P01394</accession>
<protein>
    <recommendedName>
        <fullName>Alpha-elapitoxin-Dv2b</fullName>
        <shortName>Alpha-EPTX-Dv2b</shortName>
    </recommendedName>
    <alternativeName>
        <fullName>Long neurotoxin 1</fullName>
    </alternativeName>
    <alternativeName>
        <fullName>Neurotoxin 4.7.3/4.9.3</fullName>
    </alternativeName>
</protein>
<evidence type="ECO:0000250" key="1"/>
<evidence type="ECO:0000250" key="2">
    <source>
        <dbReference type="UniProtKB" id="P60615"/>
    </source>
</evidence>
<evidence type="ECO:0000269" key="3">
    <source>
    </source>
</evidence>
<evidence type="ECO:0000305" key="4"/>
<feature type="chain" id="PRO_0000093541" description="Alpha-elapitoxin-Dv2b">
    <location>
        <begin position="1"/>
        <end position="72"/>
    </location>
</feature>
<feature type="disulfide bond" evidence="1">
    <location>
        <begin position="3"/>
        <end position="21"/>
    </location>
</feature>
<feature type="disulfide bond" evidence="1">
    <location>
        <begin position="14"/>
        <end position="42"/>
    </location>
</feature>
<feature type="disulfide bond" evidence="1">
    <location>
        <begin position="27"/>
        <end position="31"/>
    </location>
</feature>
<feature type="disulfide bond" evidence="1">
    <location>
        <begin position="46"/>
        <end position="57"/>
    </location>
</feature>
<feature type="disulfide bond" evidence="1">
    <location>
        <begin position="58"/>
        <end position="63"/>
    </location>
</feature>
<comment type="function">
    <text evidence="2">Binds with high affinity to muscular (alpha-1/CHRNA1) and neuronal (alpha-7/CHRNA7) nicotinic acetylcholine receptor (nAChR) and inhibits acetylcholine from binding to the receptor, thereby impairing neuromuscular and neuronal transmission.</text>
</comment>
<comment type="subcellular location">
    <subcellularLocation>
        <location evidence="3">Secreted</location>
    </subcellularLocation>
</comment>
<comment type="tissue specificity">
    <text evidence="4">Expressed by the venom gland.</text>
</comment>
<comment type="PTM">
    <text>Neurotoxin 4.7.3 differs from 4.9.3 only in that Trp-26 has undergone partial photooxidation.</text>
</comment>
<comment type="toxic dose">
    <text evidence="3">LD(50) is 0.9 mg/kg by intraperitoneal injection.</text>
</comment>
<comment type="similarity">
    <text evidence="4">Belongs to the three-finger toxin family. Long-chain subfamily. Type II alpha-neurotoxin sub-subfamily.</text>
</comment>
<proteinExistence type="evidence at protein level"/>
<keyword id="KW-0008">Acetylcholine receptor inhibiting toxin</keyword>
<keyword id="KW-0903">Direct protein sequencing</keyword>
<keyword id="KW-1015">Disulfide bond</keyword>
<keyword id="KW-0872">Ion channel impairing toxin</keyword>
<keyword id="KW-0528">Neurotoxin</keyword>
<keyword id="KW-0629">Postsynaptic neurotoxin</keyword>
<keyword id="KW-0964">Secreted</keyword>
<keyword id="KW-0800">Toxin</keyword>